<comment type="function">
    <text evidence="1">One of several proteins that assist in the late maturation steps of the functional core of the 30S ribosomal subunit. Helps release RbfA from mature subunits. May play a role in the assembly of ribosomal proteins into the subunit. Circularly permuted GTPase that catalyzes slow GTP hydrolysis, GTPase activity is stimulated by the 30S ribosomal subunit.</text>
</comment>
<comment type="cofactor">
    <cofactor evidence="1">
        <name>Zn(2+)</name>
        <dbReference type="ChEBI" id="CHEBI:29105"/>
    </cofactor>
    <text evidence="1">Binds 1 zinc ion per subunit.</text>
</comment>
<comment type="subunit">
    <text evidence="1">Monomer. Associates with 30S ribosomal subunit, binds 16S rRNA.</text>
</comment>
<comment type="subcellular location">
    <subcellularLocation>
        <location evidence="1">Cytoplasm</location>
    </subcellularLocation>
</comment>
<comment type="similarity">
    <text evidence="1">Belongs to the TRAFAC class YlqF/YawG GTPase family. RsgA subfamily.</text>
</comment>
<gene>
    <name evidence="1" type="primary">rsgA</name>
    <name type="ordered locus">SPAB_05482</name>
</gene>
<evidence type="ECO:0000255" key="1">
    <source>
        <dbReference type="HAMAP-Rule" id="MF_01820"/>
    </source>
</evidence>
<evidence type="ECO:0000255" key="2">
    <source>
        <dbReference type="PROSITE-ProRule" id="PRU01058"/>
    </source>
</evidence>
<evidence type="ECO:0000256" key="3">
    <source>
        <dbReference type="SAM" id="MobiDB-lite"/>
    </source>
</evidence>
<sequence>MSKNKLSKGQQRRVNANHQRRLKTSAEKADYDDNLFGEPAEGIVISRFGMHADVESADGEVHRCNIRRTIRSLVTGDRVVWRPGKAAAEGVNVKGIVEAVHERTSVLTRPDFYDGVKPIAANIDQIVIVSAILPELSLNIIDRYLVGCETLQVEPLIVLNKIDLLDDEGMDFVNEQMDIYRNIGYRVLMVSSHTQDGLKPLEEALTGRISIFAGQSGVGKSSLLNALLGLQNEILTNDVSNVSGLGQHTTTAARLYHFPHGGDVIDSPGVREFGLWHLEPEQITQGFVEFHDYLGHCKYRDCKHDADPGCAIREAVENGAIAETRFENYHRILESMAQVKTRKNFSDTDD</sequence>
<name>RSGA_SALPB</name>
<feature type="chain" id="PRO_1000188137" description="Small ribosomal subunit biogenesis GTPase RsgA">
    <location>
        <begin position="1"/>
        <end position="350"/>
    </location>
</feature>
<feature type="domain" description="CP-type G" evidence="2">
    <location>
        <begin position="104"/>
        <end position="273"/>
    </location>
</feature>
<feature type="region of interest" description="Disordered" evidence="3">
    <location>
        <begin position="1"/>
        <end position="27"/>
    </location>
</feature>
<feature type="compositionally biased region" description="Polar residues" evidence="3">
    <location>
        <begin position="1"/>
        <end position="17"/>
    </location>
</feature>
<feature type="binding site" evidence="1">
    <location>
        <begin position="160"/>
        <end position="163"/>
    </location>
    <ligand>
        <name>GTP</name>
        <dbReference type="ChEBI" id="CHEBI:37565"/>
    </ligand>
</feature>
<feature type="binding site" evidence="1">
    <location>
        <begin position="214"/>
        <end position="222"/>
    </location>
    <ligand>
        <name>GTP</name>
        <dbReference type="ChEBI" id="CHEBI:37565"/>
    </ligand>
</feature>
<feature type="binding site" evidence="1">
    <location>
        <position position="297"/>
    </location>
    <ligand>
        <name>Zn(2+)</name>
        <dbReference type="ChEBI" id="CHEBI:29105"/>
    </ligand>
</feature>
<feature type="binding site" evidence="1">
    <location>
        <position position="302"/>
    </location>
    <ligand>
        <name>Zn(2+)</name>
        <dbReference type="ChEBI" id="CHEBI:29105"/>
    </ligand>
</feature>
<feature type="binding site" evidence="1">
    <location>
        <position position="304"/>
    </location>
    <ligand>
        <name>Zn(2+)</name>
        <dbReference type="ChEBI" id="CHEBI:29105"/>
    </ligand>
</feature>
<feature type="binding site" evidence="1">
    <location>
        <position position="310"/>
    </location>
    <ligand>
        <name>Zn(2+)</name>
        <dbReference type="ChEBI" id="CHEBI:29105"/>
    </ligand>
</feature>
<reference key="1">
    <citation type="submission" date="2007-11" db="EMBL/GenBank/DDBJ databases">
        <authorList>
            <consortium name="The Salmonella enterica serovar Paratyphi B Genome Sequencing Project"/>
            <person name="McClelland M."/>
            <person name="Sanderson E.K."/>
            <person name="Porwollik S."/>
            <person name="Spieth J."/>
            <person name="Clifton W.S."/>
            <person name="Fulton R."/>
            <person name="Cordes M."/>
            <person name="Wollam A."/>
            <person name="Shah N."/>
            <person name="Pepin K."/>
            <person name="Bhonagiri V."/>
            <person name="Nash W."/>
            <person name="Johnson M."/>
            <person name="Thiruvilangam P."/>
            <person name="Wilson R."/>
        </authorList>
    </citation>
    <scope>NUCLEOTIDE SEQUENCE [LARGE SCALE GENOMIC DNA]</scope>
    <source>
        <strain>ATCC BAA-1250 / SPB7</strain>
    </source>
</reference>
<keyword id="KW-0963">Cytoplasm</keyword>
<keyword id="KW-0342">GTP-binding</keyword>
<keyword id="KW-0378">Hydrolase</keyword>
<keyword id="KW-0479">Metal-binding</keyword>
<keyword id="KW-0547">Nucleotide-binding</keyword>
<keyword id="KW-0690">Ribosome biogenesis</keyword>
<keyword id="KW-0694">RNA-binding</keyword>
<keyword id="KW-0699">rRNA-binding</keyword>
<keyword id="KW-0862">Zinc</keyword>
<accession>A9N420</accession>
<organism>
    <name type="scientific">Salmonella paratyphi B (strain ATCC BAA-1250 / SPB7)</name>
    <dbReference type="NCBI Taxonomy" id="1016998"/>
    <lineage>
        <taxon>Bacteria</taxon>
        <taxon>Pseudomonadati</taxon>
        <taxon>Pseudomonadota</taxon>
        <taxon>Gammaproteobacteria</taxon>
        <taxon>Enterobacterales</taxon>
        <taxon>Enterobacteriaceae</taxon>
        <taxon>Salmonella</taxon>
    </lineage>
</organism>
<protein>
    <recommendedName>
        <fullName evidence="1">Small ribosomal subunit biogenesis GTPase RsgA</fullName>
        <ecNumber evidence="1">3.6.1.-</ecNumber>
    </recommendedName>
</protein>
<proteinExistence type="inferred from homology"/>
<dbReference type="EC" id="3.6.1.-" evidence="1"/>
<dbReference type="EMBL" id="CP000886">
    <property type="protein sequence ID" value="ABX70754.1"/>
    <property type="molecule type" value="Genomic_DNA"/>
</dbReference>
<dbReference type="RefSeq" id="WP_000041945.1">
    <property type="nucleotide sequence ID" value="NC_010102.1"/>
</dbReference>
<dbReference type="SMR" id="A9N420"/>
<dbReference type="KEGG" id="spq:SPAB_05482"/>
<dbReference type="PATRIC" id="fig|1016998.12.peg.5139"/>
<dbReference type="HOGENOM" id="CLU_033617_2_0_6"/>
<dbReference type="Proteomes" id="UP000008556">
    <property type="component" value="Chromosome"/>
</dbReference>
<dbReference type="GO" id="GO:0005737">
    <property type="term" value="C:cytoplasm"/>
    <property type="evidence" value="ECO:0007669"/>
    <property type="project" value="UniProtKB-SubCell"/>
</dbReference>
<dbReference type="GO" id="GO:0005525">
    <property type="term" value="F:GTP binding"/>
    <property type="evidence" value="ECO:0007669"/>
    <property type="project" value="UniProtKB-UniRule"/>
</dbReference>
<dbReference type="GO" id="GO:0003924">
    <property type="term" value="F:GTPase activity"/>
    <property type="evidence" value="ECO:0007669"/>
    <property type="project" value="UniProtKB-UniRule"/>
</dbReference>
<dbReference type="GO" id="GO:0046872">
    <property type="term" value="F:metal ion binding"/>
    <property type="evidence" value="ECO:0007669"/>
    <property type="project" value="UniProtKB-KW"/>
</dbReference>
<dbReference type="GO" id="GO:0019843">
    <property type="term" value="F:rRNA binding"/>
    <property type="evidence" value="ECO:0007669"/>
    <property type="project" value="UniProtKB-KW"/>
</dbReference>
<dbReference type="GO" id="GO:0042274">
    <property type="term" value="P:ribosomal small subunit biogenesis"/>
    <property type="evidence" value="ECO:0007669"/>
    <property type="project" value="UniProtKB-UniRule"/>
</dbReference>
<dbReference type="CDD" id="cd01854">
    <property type="entry name" value="YjeQ_EngC"/>
    <property type="match status" value="1"/>
</dbReference>
<dbReference type="FunFam" id="1.10.40.50:FF:000001">
    <property type="entry name" value="Small ribosomal subunit biogenesis GTPase RsgA"/>
    <property type="match status" value="1"/>
</dbReference>
<dbReference type="FunFam" id="3.40.50.300:FF:000389">
    <property type="entry name" value="Small ribosomal subunit biogenesis GTPase RsgA"/>
    <property type="match status" value="1"/>
</dbReference>
<dbReference type="Gene3D" id="2.40.50.140">
    <property type="entry name" value="Nucleic acid-binding proteins"/>
    <property type="match status" value="1"/>
</dbReference>
<dbReference type="Gene3D" id="3.40.50.300">
    <property type="entry name" value="P-loop containing nucleotide triphosphate hydrolases"/>
    <property type="match status" value="1"/>
</dbReference>
<dbReference type="Gene3D" id="1.10.40.50">
    <property type="entry name" value="Probable gtpase engc, domain 3"/>
    <property type="match status" value="1"/>
</dbReference>
<dbReference type="HAMAP" id="MF_01820">
    <property type="entry name" value="GTPase_RsgA"/>
    <property type="match status" value="1"/>
</dbReference>
<dbReference type="InterPro" id="IPR030378">
    <property type="entry name" value="G_CP_dom"/>
</dbReference>
<dbReference type="InterPro" id="IPR012340">
    <property type="entry name" value="NA-bd_OB-fold"/>
</dbReference>
<dbReference type="InterPro" id="IPR027417">
    <property type="entry name" value="P-loop_NTPase"/>
</dbReference>
<dbReference type="InterPro" id="IPR004881">
    <property type="entry name" value="Ribosome_biogen_GTPase_RsgA"/>
</dbReference>
<dbReference type="InterPro" id="IPR010914">
    <property type="entry name" value="RsgA_GTPase_dom"/>
</dbReference>
<dbReference type="NCBIfam" id="NF008931">
    <property type="entry name" value="PRK12288.1"/>
    <property type="match status" value="1"/>
</dbReference>
<dbReference type="NCBIfam" id="TIGR00157">
    <property type="entry name" value="ribosome small subunit-dependent GTPase A"/>
    <property type="match status" value="1"/>
</dbReference>
<dbReference type="PANTHER" id="PTHR32120">
    <property type="entry name" value="SMALL RIBOSOMAL SUBUNIT BIOGENESIS GTPASE RSGA"/>
    <property type="match status" value="1"/>
</dbReference>
<dbReference type="PANTHER" id="PTHR32120:SF11">
    <property type="entry name" value="SMALL RIBOSOMAL SUBUNIT BIOGENESIS GTPASE RSGA 1, MITOCHONDRIAL-RELATED"/>
    <property type="match status" value="1"/>
</dbReference>
<dbReference type="Pfam" id="PF03193">
    <property type="entry name" value="RsgA_GTPase"/>
    <property type="match status" value="1"/>
</dbReference>
<dbReference type="SUPFAM" id="SSF52540">
    <property type="entry name" value="P-loop containing nucleoside triphosphate hydrolases"/>
    <property type="match status" value="1"/>
</dbReference>
<dbReference type="PROSITE" id="PS50936">
    <property type="entry name" value="ENGC_GTPASE"/>
    <property type="match status" value="1"/>
</dbReference>
<dbReference type="PROSITE" id="PS51721">
    <property type="entry name" value="G_CP"/>
    <property type="match status" value="1"/>
</dbReference>